<evidence type="ECO:0000250" key="1">
    <source>
        <dbReference type="UniProtKB" id="P11411"/>
    </source>
</evidence>
<evidence type="ECO:0000250" key="2">
    <source>
        <dbReference type="UniProtKB" id="P11413"/>
    </source>
</evidence>
<evidence type="ECO:0000269" key="3">
    <source>
    </source>
</evidence>
<evidence type="ECO:0000269" key="4">
    <source>
    </source>
</evidence>
<evidence type="ECO:0000305" key="5"/>
<evidence type="ECO:0000312" key="6">
    <source>
        <dbReference type="EMBL" id="AAA51463.1"/>
    </source>
</evidence>
<evidence type="ECO:0000312" key="7">
    <source>
        <dbReference type="EMBL" id="ACK77607.1"/>
    </source>
</evidence>
<evidence type="ECO:0000312" key="8">
    <source>
        <dbReference type="FlyBase" id="FBgn0004057"/>
    </source>
</evidence>
<evidence type="ECO:0000312" key="9">
    <source>
        <dbReference type="Proteomes" id="UP000000803"/>
    </source>
</evidence>
<feature type="chain" id="PRO_0000068092" description="Glucose-6-phosphate 1-dehydrogenase">
    <location>
        <begin position="1"/>
        <end position="524"/>
    </location>
</feature>
<feature type="active site" description="Proton acceptor" evidence="1">
    <location>
        <position position="267"/>
    </location>
</feature>
<feature type="binding site" evidence="2">
    <location>
        <begin position="42"/>
        <end position="49"/>
    </location>
    <ligand>
        <name>NADP(+)</name>
        <dbReference type="ChEBI" id="CHEBI:58349"/>
        <label>1</label>
    </ligand>
</feature>
<feature type="binding site" evidence="2">
    <location>
        <position position="76"/>
    </location>
    <ligand>
        <name>NADP(+)</name>
        <dbReference type="ChEBI" id="CHEBI:58349"/>
        <label>1</label>
    </ligand>
</feature>
<feature type="binding site" evidence="2">
    <location>
        <position position="175"/>
    </location>
    <ligand>
        <name>D-glucose 6-phosphate</name>
        <dbReference type="ChEBI" id="CHEBI:61548"/>
    </ligand>
</feature>
<feature type="binding site" evidence="2">
    <location>
        <position position="175"/>
    </location>
    <ligand>
        <name>NADP(+)</name>
        <dbReference type="ChEBI" id="CHEBI:58349"/>
        <label>1</label>
    </ligand>
</feature>
<feature type="binding site" evidence="2">
    <location>
        <begin position="205"/>
        <end position="209"/>
    </location>
    <ligand>
        <name>D-glucose 6-phosphate</name>
        <dbReference type="ChEBI" id="CHEBI:61548"/>
    </ligand>
</feature>
<feature type="binding site" evidence="2">
    <location>
        <position position="243"/>
    </location>
    <ligand>
        <name>D-glucose 6-phosphate</name>
        <dbReference type="ChEBI" id="CHEBI:61548"/>
    </ligand>
</feature>
<feature type="binding site" evidence="2">
    <location>
        <position position="262"/>
    </location>
    <ligand>
        <name>D-glucose 6-phosphate</name>
        <dbReference type="ChEBI" id="CHEBI:61548"/>
    </ligand>
</feature>
<feature type="binding site" evidence="2">
    <location>
        <position position="362"/>
    </location>
    <ligand>
        <name>NADP(+)</name>
        <dbReference type="ChEBI" id="CHEBI:58349"/>
        <label>2</label>
    </ligand>
</feature>
<feature type="binding site" evidence="2">
    <location>
        <position position="365"/>
    </location>
    <ligand>
        <name>D-glucose 6-phosphate</name>
        <dbReference type="ChEBI" id="CHEBI:61548"/>
    </ligand>
</feature>
<feature type="binding site" evidence="2">
    <location>
        <position position="370"/>
    </location>
    <ligand>
        <name>D-glucose 6-phosphate</name>
        <dbReference type="ChEBI" id="CHEBI:61548"/>
    </ligand>
</feature>
<feature type="binding site" evidence="2">
    <location>
        <position position="371"/>
    </location>
    <ligand>
        <name>NADP(+)</name>
        <dbReference type="ChEBI" id="CHEBI:58349"/>
        <label>2</label>
    </ligand>
</feature>
<feature type="binding site" evidence="2">
    <location>
        <position position="375"/>
    </location>
    <ligand>
        <name>NADP(+)</name>
        <dbReference type="ChEBI" id="CHEBI:58349"/>
        <label>2</label>
    </ligand>
</feature>
<feature type="binding site" evidence="2">
    <location>
        <position position="398"/>
    </location>
    <ligand>
        <name>NADP(+)</name>
        <dbReference type="ChEBI" id="CHEBI:58349"/>
        <label>2</label>
    </ligand>
</feature>
<feature type="binding site" evidence="2">
    <location>
        <position position="400"/>
    </location>
    <ligand>
        <name>D-glucose 6-phosphate</name>
        <dbReference type="ChEBI" id="CHEBI:61548"/>
    </ligand>
</feature>
<feature type="binding site" evidence="2">
    <location>
        <begin position="406"/>
        <end position="408"/>
    </location>
    <ligand>
        <name>NADP(+)</name>
        <dbReference type="ChEBI" id="CHEBI:58349"/>
        <label>2</label>
    </ligand>
</feature>
<feature type="binding site" evidence="2">
    <location>
        <begin position="426"/>
        <end position="428"/>
    </location>
    <ligand>
        <name>NADP(+)</name>
        <dbReference type="ChEBI" id="CHEBI:58349"/>
        <label>2</label>
    </ligand>
</feature>
<feature type="binding site" evidence="2">
    <location>
        <position position="492"/>
    </location>
    <ligand>
        <name>NADP(+)</name>
        <dbReference type="ChEBI" id="CHEBI:58349"/>
        <label>2</label>
    </ligand>
</feature>
<feature type="binding site" evidence="2">
    <location>
        <position position="508"/>
    </location>
    <ligand>
        <name>NADP(+)</name>
        <dbReference type="ChEBI" id="CHEBI:58349"/>
        <label>2</label>
    </ligand>
</feature>
<feature type="binding site" evidence="2">
    <location>
        <position position="514"/>
    </location>
    <ligand>
        <name>NADP(+)</name>
        <dbReference type="ChEBI" id="CHEBI:58349"/>
        <label>2</label>
    </ligand>
</feature>
<feature type="modified residue" description="Phosphoserine" evidence="3">
    <location>
        <position position="20"/>
    </location>
</feature>
<feature type="splice variant" id="VSP_001593" description="In isoform B." evidence="5">
    <location>
        <begin position="1"/>
        <end position="22"/>
    </location>
</feature>
<feature type="sequence variant" description="In strain: F24.1, MT32 and MT68.">
    <original>G</original>
    <variation>C</variation>
    <location>
        <position position="32"/>
    </location>
</feature>
<feature type="sequence variant" description="In strain: Z74.">
    <original>T</original>
    <variation>N</variation>
    <location>
        <position position="80"/>
    </location>
</feature>
<feature type="sequence variant" description="In strain: MT32, MT68, F24.1, Z62 and Z41.">
    <original>P</original>
    <variation>L</variation>
    <location>
        <position position="382"/>
    </location>
</feature>
<feature type="sequence conflict" description="In Ref. 1; AAA51463." evidence="5" ref="1">
    <original>QA</original>
    <variation>AG</variation>
    <location>
        <begin position="185"/>
        <end position="186"/>
    </location>
</feature>
<feature type="sequence conflict" description="In Ref. 1; AAA51463." evidence="5" ref="1">
    <original>N</original>
    <variation>K</variation>
    <location>
        <position position="214"/>
    </location>
</feature>
<feature type="sequence conflict" description="In Ref. 1; AAA51463." evidence="5" ref="1">
    <original>LGV</original>
    <variation>ARS</variation>
    <location>
        <begin position="344"/>
        <end position="346"/>
    </location>
</feature>
<feature type="sequence conflict" description="In Ref. 1; AAA51463." evidence="5" ref="1">
    <original>DELRE</original>
    <variation>AAAQ</variation>
    <location>
        <begin position="461"/>
        <end position="465"/>
    </location>
</feature>
<keyword id="KW-0025">Alternative splicing</keyword>
<keyword id="KW-0119">Carbohydrate metabolism</keyword>
<keyword id="KW-0963">Cytoplasm</keyword>
<keyword id="KW-0313">Glucose metabolism</keyword>
<keyword id="KW-0521">NADP</keyword>
<keyword id="KW-0560">Oxidoreductase</keyword>
<keyword id="KW-0597">Phosphoprotein</keyword>
<keyword id="KW-1185">Reference proteome</keyword>
<gene>
    <name evidence="8" type="primary">G6pd</name>
    <name evidence="8" type="synonym">Zw</name>
    <name evidence="8" type="ORF">CG12529</name>
</gene>
<accession>P12646</accession>
<accession>B7FNK0</accession>
<accession>Q27574</accession>
<accession>Q27872</accession>
<accession>Q27879</accession>
<accession>Q27881</accession>
<accession>Q9VWE2</accession>
<accession>Q9VWE3</accession>
<accession>X2JEF0</accession>
<comment type="function">
    <text evidence="2">Cytosolic glucose-6-phosphate dehydrogenase that catalyzes the first and rate-limiting step of the oxidative branch within the pentose phosphate pathway/shunt, an alternative route to glycolysis for the dissimilation of carbohydrates and a major source of reducing power and metabolic intermediates for fatty acid and nucleic acid biosynthetic processes.</text>
</comment>
<comment type="catalytic activity">
    <reaction evidence="2">
        <text>D-glucose 6-phosphate + NADP(+) = 6-phospho-D-glucono-1,5-lactone + NADPH + H(+)</text>
        <dbReference type="Rhea" id="RHEA:15841"/>
        <dbReference type="ChEBI" id="CHEBI:15378"/>
        <dbReference type="ChEBI" id="CHEBI:57783"/>
        <dbReference type="ChEBI" id="CHEBI:57955"/>
        <dbReference type="ChEBI" id="CHEBI:58349"/>
        <dbReference type="ChEBI" id="CHEBI:61548"/>
        <dbReference type="EC" id="1.1.1.49"/>
    </reaction>
    <physiologicalReaction direction="left-to-right" evidence="2">
        <dbReference type="Rhea" id="RHEA:15842"/>
    </physiologicalReaction>
</comment>
<comment type="pathway">
    <text evidence="2">Carbohydrate degradation; pentose phosphate pathway; D-ribulose 5-phosphate from D-glucose 6-phosphate (oxidative stage): step 1/3.</text>
</comment>
<comment type="subcellular location">
    <subcellularLocation>
        <location evidence="2">Cytoplasm</location>
        <location evidence="2">Cytosol</location>
    </subcellularLocation>
</comment>
<comment type="alternative products">
    <event type="alternative splicing"/>
    <isoform>
        <id>P12646-1</id>
        <name evidence="8">A</name>
        <sequence type="displayed"/>
    </isoform>
    <isoform>
        <id>P12646-2</id>
        <name evidence="8">B</name>
        <name evidence="8">C</name>
        <sequence type="described" ref="VSP_001593"/>
    </isoform>
    <text evidence="4">Differential exon usage is regulated by splicing factor x16.</text>
</comment>
<comment type="similarity">
    <text evidence="5">Belongs to the glucose-6-phosphate dehydrogenase family.</text>
</comment>
<reference evidence="6" key="1">
    <citation type="journal article" date="1988" name="Gene">
        <title>Nucleotide sequence of the Drosophila glucose-6-phosphate dehydrogenase gene and comparison with the homologous human gene.</title>
        <authorList>
            <person name="Fouts D."/>
            <person name="Ganguly R."/>
            <person name="Gutierrez A.G."/>
            <person name="Lucchesi J.C."/>
            <person name="Manning J.E."/>
        </authorList>
    </citation>
    <scope>NUCLEOTIDE SEQUENCE [GENOMIC DNA]</scope>
</reference>
<reference key="2">
    <citation type="journal article" date="1996" name="Genetics">
        <title>Historical selection, amino acid polymorphism and lineage-specific divergence at the G6pd locus in Drosophila melanogaster and D. simulans.</title>
        <authorList>
            <person name="Eanes W.F."/>
            <person name="Kirchner M."/>
            <person name="Yoon J."/>
            <person name="Biermann C.H."/>
            <person name="Wang I.N."/>
            <person name="McCartney M.A."/>
            <person name="Verrelli B.C."/>
        </authorList>
    </citation>
    <scope>NUCLEOTIDE SEQUENCE [GENOMIC DNA]</scope>
    <source>
        <strain>F23.3</strain>
        <strain>F24.1</strain>
        <strain>MT32</strain>
        <strain>MT41</strain>
        <strain>MT68</strain>
        <strain>Z11</strain>
        <strain>Z16</strain>
        <strain>Z21</strain>
        <strain>Z27</strain>
        <strain>Z3</strain>
        <strain>Z41</strain>
        <strain>Z42</strain>
        <strain>Z5</strain>
        <strain>Z55</strain>
        <strain>Z62</strain>
        <strain>Z64</strain>
        <strain>Z74</strain>
    </source>
</reference>
<reference key="3">
    <citation type="journal article" date="2000" name="Science">
        <title>The genome sequence of Drosophila melanogaster.</title>
        <authorList>
            <person name="Adams M.D."/>
            <person name="Celniker S.E."/>
            <person name="Holt R.A."/>
            <person name="Evans C.A."/>
            <person name="Gocayne J.D."/>
            <person name="Amanatides P.G."/>
            <person name="Scherer S.E."/>
            <person name="Li P.W."/>
            <person name="Hoskins R.A."/>
            <person name="Galle R.F."/>
            <person name="George R.A."/>
            <person name="Lewis S.E."/>
            <person name="Richards S."/>
            <person name="Ashburner M."/>
            <person name="Henderson S.N."/>
            <person name="Sutton G.G."/>
            <person name="Wortman J.R."/>
            <person name="Yandell M.D."/>
            <person name="Zhang Q."/>
            <person name="Chen L.X."/>
            <person name="Brandon R.C."/>
            <person name="Rogers Y.-H.C."/>
            <person name="Blazej R.G."/>
            <person name="Champe M."/>
            <person name="Pfeiffer B.D."/>
            <person name="Wan K.H."/>
            <person name="Doyle C."/>
            <person name="Baxter E.G."/>
            <person name="Helt G."/>
            <person name="Nelson C.R."/>
            <person name="Miklos G.L.G."/>
            <person name="Abril J.F."/>
            <person name="Agbayani A."/>
            <person name="An H.-J."/>
            <person name="Andrews-Pfannkoch C."/>
            <person name="Baldwin D."/>
            <person name="Ballew R.M."/>
            <person name="Basu A."/>
            <person name="Baxendale J."/>
            <person name="Bayraktaroglu L."/>
            <person name="Beasley E.M."/>
            <person name="Beeson K.Y."/>
            <person name="Benos P.V."/>
            <person name="Berman B.P."/>
            <person name="Bhandari D."/>
            <person name="Bolshakov S."/>
            <person name="Borkova D."/>
            <person name="Botchan M.R."/>
            <person name="Bouck J."/>
            <person name="Brokstein P."/>
            <person name="Brottier P."/>
            <person name="Burtis K.C."/>
            <person name="Busam D.A."/>
            <person name="Butler H."/>
            <person name="Cadieu E."/>
            <person name="Center A."/>
            <person name="Chandra I."/>
            <person name="Cherry J.M."/>
            <person name="Cawley S."/>
            <person name="Dahlke C."/>
            <person name="Davenport L.B."/>
            <person name="Davies P."/>
            <person name="de Pablos B."/>
            <person name="Delcher A."/>
            <person name="Deng Z."/>
            <person name="Mays A.D."/>
            <person name="Dew I."/>
            <person name="Dietz S.M."/>
            <person name="Dodson K."/>
            <person name="Doup L.E."/>
            <person name="Downes M."/>
            <person name="Dugan-Rocha S."/>
            <person name="Dunkov B.C."/>
            <person name="Dunn P."/>
            <person name="Durbin K.J."/>
            <person name="Evangelista C.C."/>
            <person name="Ferraz C."/>
            <person name="Ferriera S."/>
            <person name="Fleischmann W."/>
            <person name="Fosler C."/>
            <person name="Gabrielian A.E."/>
            <person name="Garg N.S."/>
            <person name="Gelbart W.M."/>
            <person name="Glasser K."/>
            <person name="Glodek A."/>
            <person name="Gong F."/>
            <person name="Gorrell J.H."/>
            <person name="Gu Z."/>
            <person name="Guan P."/>
            <person name="Harris M."/>
            <person name="Harris N.L."/>
            <person name="Harvey D.A."/>
            <person name="Heiman T.J."/>
            <person name="Hernandez J.R."/>
            <person name="Houck J."/>
            <person name="Hostin D."/>
            <person name="Houston K.A."/>
            <person name="Howland T.J."/>
            <person name="Wei M.-H."/>
            <person name="Ibegwam C."/>
            <person name="Jalali M."/>
            <person name="Kalush F."/>
            <person name="Karpen G.H."/>
            <person name="Ke Z."/>
            <person name="Kennison J.A."/>
            <person name="Ketchum K.A."/>
            <person name="Kimmel B.E."/>
            <person name="Kodira C.D."/>
            <person name="Kraft C.L."/>
            <person name="Kravitz S."/>
            <person name="Kulp D."/>
            <person name="Lai Z."/>
            <person name="Lasko P."/>
            <person name="Lei Y."/>
            <person name="Levitsky A.A."/>
            <person name="Li J.H."/>
            <person name="Li Z."/>
            <person name="Liang Y."/>
            <person name="Lin X."/>
            <person name="Liu X."/>
            <person name="Mattei B."/>
            <person name="McIntosh T.C."/>
            <person name="McLeod M.P."/>
            <person name="McPherson D."/>
            <person name="Merkulov G."/>
            <person name="Milshina N.V."/>
            <person name="Mobarry C."/>
            <person name="Morris J."/>
            <person name="Moshrefi A."/>
            <person name="Mount S.M."/>
            <person name="Moy M."/>
            <person name="Murphy B."/>
            <person name="Murphy L."/>
            <person name="Muzny D.M."/>
            <person name="Nelson D.L."/>
            <person name="Nelson D.R."/>
            <person name="Nelson K.A."/>
            <person name="Nixon K."/>
            <person name="Nusskern D.R."/>
            <person name="Pacleb J.M."/>
            <person name="Palazzolo M."/>
            <person name="Pittman G.S."/>
            <person name="Pan S."/>
            <person name="Pollard J."/>
            <person name="Puri V."/>
            <person name="Reese M.G."/>
            <person name="Reinert K."/>
            <person name="Remington K."/>
            <person name="Saunders R.D.C."/>
            <person name="Scheeler F."/>
            <person name="Shen H."/>
            <person name="Shue B.C."/>
            <person name="Siden-Kiamos I."/>
            <person name="Simpson M."/>
            <person name="Skupski M.P."/>
            <person name="Smith T.J."/>
            <person name="Spier E."/>
            <person name="Spradling A.C."/>
            <person name="Stapleton M."/>
            <person name="Strong R."/>
            <person name="Sun E."/>
            <person name="Svirskas R."/>
            <person name="Tector C."/>
            <person name="Turner R."/>
            <person name="Venter E."/>
            <person name="Wang A.H."/>
            <person name="Wang X."/>
            <person name="Wang Z.-Y."/>
            <person name="Wassarman D.A."/>
            <person name="Weinstock G.M."/>
            <person name="Weissenbach J."/>
            <person name="Williams S.M."/>
            <person name="Woodage T."/>
            <person name="Worley K.C."/>
            <person name="Wu D."/>
            <person name="Yang S."/>
            <person name="Yao Q.A."/>
            <person name="Ye J."/>
            <person name="Yeh R.-F."/>
            <person name="Zaveri J.S."/>
            <person name="Zhan M."/>
            <person name="Zhang G."/>
            <person name="Zhao Q."/>
            <person name="Zheng L."/>
            <person name="Zheng X.H."/>
            <person name="Zhong F.N."/>
            <person name="Zhong W."/>
            <person name="Zhou X."/>
            <person name="Zhu S.C."/>
            <person name="Zhu X."/>
            <person name="Smith H.O."/>
            <person name="Gibbs R.A."/>
            <person name="Myers E.W."/>
            <person name="Rubin G.M."/>
            <person name="Venter J.C."/>
        </authorList>
    </citation>
    <scope>NUCLEOTIDE SEQUENCE [LARGE SCALE GENOMIC DNA]</scope>
    <source>
        <strain>Berkeley</strain>
    </source>
</reference>
<reference key="4">
    <citation type="journal article" date="2002" name="Genome Biol.">
        <title>Annotation of the Drosophila melanogaster euchromatic genome: a systematic review.</title>
        <authorList>
            <person name="Misra S."/>
            <person name="Crosby M.A."/>
            <person name="Mungall C.J."/>
            <person name="Matthews B.B."/>
            <person name="Campbell K.S."/>
            <person name="Hradecky P."/>
            <person name="Huang Y."/>
            <person name="Kaminker J.S."/>
            <person name="Millburn G.H."/>
            <person name="Prochnik S.E."/>
            <person name="Smith C.D."/>
            <person name="Tupy J.L."/>
            <person name="Whitfield E.J."/>
            <person name="Bayraktaroglu L."/>
            <person name="Berman B.P."/>
            <person name="Bettencourt B.R."/>
            <person name="Celniker S.E."/>
            <person name="de Grey A.D.N.J."/>
            <person name="Drysdale R.A."/>
            <person name="Harris N.L."/>
            <person name="Richter J."/>
            <person name="Russo S."/>
            <person name="Schroeder A.J."/>
            <person name="Shu S.Q."/>
            <person name="Stapleton M."/>
            <person name="Yamada C."/>
            <person name="Ashburner M."/>
            <person name="Gelbart W.M."/>
            <person name="Rubin G.M."/>
            <person name="Lewis S.E."/>
        </authorList>
    </citation>
    <scope>GENOME REANNOTATION</scope>
    <scope>ALTERNATIVE SPLICING</scope>
    <source>
        <strain>Berkeley</strain>
    </source>
</reference>
<reference key="5">
    <citation type="journal article" date="2002" name="Genome Biol.">
        <title>A Drosophila full-length cDNA resource.</title>
        <authorList>
            <person name="Stapleton M."/>
            <person name="Carlson J.W."/>
            <person name="Brokstein P."/>
            <person name="Yu C."/>
            <person name="Champe M."/>
            <person name="George R.A."/>
            <person name="Guarin H."/>
            <person name="Kronmiller B."/>
            <person name="Pacleb J.M."/>
            <person name="Park S."/>
            <person name="Wan K.H."/>
            <person name="Rubin G.M."/>
            <person name="Celniker S.E."/>
        </authorList>
    </citation>
    <scope>NUCLEOTIDE SEQUENCE [LARGE SCALE MRNA] (ISOFORM A)</scope>
    <source>
        <strain>Berkeley</strain>
        <tissue>Embryo</tissue>
    </source>
</reference>
<reference evidence="7" key="6">
    <citation type="submission" date="2008-12" db="EMBL/GenBank/DDBJ databases">
        <authorList>
            <person name="Carlson J."/>
            <person name="Booth B."/>
            <person name="Frise E."/>
            <person name="Park S."/>
            <person name="Wan K."/>
            <person name="Yu C."/>
            <person name="Celniker S."/>
        </authorList>
    </citation>
    <scope>NUCLEOTIDE SEQUENCE [LARGE SCALE MRNA] (ISOFORM A)</scope>
</reference>
<reference key="7">
    <citation type="journal article" date="2008" name="J. Proteome Res.">
        <title>Phosphoproteome analysis of Drosophila melanogaster embryos.</title>
        <authorList>
            <person name="Zhai B."/>
            <person name="Villen J."/>
            <person name="Beausoleil S.A."/>
            <person name="Mintseris J."/>
            <person name="Gygi S.P."/>
        </authorList>
    </citation>
    <scope>PHOSPHORYLATION [LARGE SCALE ANALYSIS] AT SER-20</scope>
    <scope>IDENTIFICATION BY MASS SPECTROMETRY</scope>
    <source>
        <tissue>Embryo</tissue>
    </source>
</reference>
<reference key="8">
    <citation type="journal article" date="2022" name="Biochem. Biophys. Res. Commun.">
        <title>The splicing factor 9G8 regulates the expression of NADPH-producing enzyme genes in Drosophila.</title>
        <authorList>
            <person name="Weidman T."/>
            <person name="Nagengast A.A."/>
            <person name="DiAngelo J.R."/>
        </authorList>
    </citation>
    <scope>ALTERNATIVE SPLICING</scope>
</reference>
<proteinExistence type="evidence at protein level"/>
<dbReference type="EC" id="1.1.1.49" evidence="2"/>
<dbReference type="EMBL" id="M26674">
    <property type="protein sequence ID" value="AAA51463.1"/>
    <property type="molecule type" value="Genomic_DNA"/>
</dbReference>
<dbReference type="EMBL" id="M26673">
    <property type="protein sequence ID" value="AAA51463.1"/>
    <property type="status" value="JOINED"/>
    <property type="molecule type" value="Genomic_DNA"/>
</dbReference>
<dbReference type="EMBL" id="U42738">
    <property type="protein sequence ID" value="AAB02801.1"/>
    <property type="molecule type" value="Genomic_DNA"/>
</dbReference>
<dbReference type="EMBL" id="U42739">
    <property type="protein sequence ID" value="AAB02802.1"/>
    <property type="molecule type" value="Genomic_DNA"/>
</dbReference>
<dbReference type="EMBL" id="U42740">
    <property type="protein sequence ID" value="AAB02803.1"/>
    <property type="molecule type" value="Genomic_DNA"/>
</dbReference>
<dbReference type="EMBL" id="U42741">
    <property type="protein sequence ID" value="AAB02804.1"/>
    <property type="molecule type" value="Genomic_DNA"/>
</dbReference>
<dbReference type="EMBL" id="U42742">
    <property type="protein sequence ID" value="AAB02805.1"/>
    <property type="molecule type" value="Genomic_DNA"/>
</dbReference>
<dbReference type="EMBL" id="U42743">
    <property type="protein sequence ID" value="AAB02806.1"/>
    <property type="molecule type" value="Genomic_DNA"/>
</dbReference>
<dbReference type="EMBL" id="U42744">
    <property type="protein sequence ID" value="AAB02807.1"/>
    <property type="molecule type" value="Genomic_DNA"/>
</dbReference>
<dbReference type="EMBL" id="U42745">
    <property type="protein sequence ID" value="AAB02808.1"/>
    <property type="molecule type" value="Genomic_DNA"/>
</dbReference>
<dbReference type="EMBL" id="U42746">
    <property type="protein sequence ID" value="AAB02809.1"/>
    <property type="molecule type" value="Genomic_DNA"/>
</dbReference>
<dbReference type="EMBL" id="U42747">
    <property type="protein sequence ID" value="AAB02810.1"/>
    <property type="molecule type" value="Genomic_DNA"/>
</dbReference>
<dbReference type="EMBL" id="U42748">
    <property type="protein sequence ID" value="AAB02811.1"/>
    <property type="molecule type" value="Genomic_DNA"/>
</dbReference>
<dbReference type="EMBL" id="U42749">
    <property type="protein sequence ID" value="AAB02812.1"/>
    <property type="molecule type" value="Genomic_DNA"/>
</dbReference>
<dbReference type="EMBL" id="U43165">
    <property type="protein sequence ID" value="AAA99071.1"/>
    <property type="molecule type" value="Genomic_DNA"/>
</dbReference>
<dbReference type="EMBL" id="U43166">
    <property type="protein sequence ID" value="AAA99072.1"/>
    <property type="molecule type" value="Genomic_DNA"/>
</dbReference>
<dbReference type="EMBL" id="U43167">
    <property type="protein sequence ID" value="AAA99073.1"/>
    <property type="molecule type" value="Genomic_DNA"/>
</dbReference>
<dbReference type="EMBL" id="U44721">
    <property type="protein sequence ID" value="AAA99092.1"/>
    <property type="molecule type" value="Genomic_DNA"/>
</dbReference>
<dbReference type="EMBL" id="U45985">
    <property type="protein sequence ID" value="AAA99107.1"/>
    <property type="molecule type" value="Genomic_DNA"/>
</dbReference>
<dbReference type="EMBL" id="AE014298">
    <property type="protein sequence ID" value="AAF48999.1"/>
    <property type="molecule type" value="Genomic_DNA"/>
</dbReference>
<dbReference type="EMBL" id="AE014298">
    <property type="protein sequence ID" value="AAF49000.2"/>
    <property type="molecule type" value="Genomic_DNA"/>
</dbReference>
<dbReference type="EMBL" id="AE014298">
    <property type="protein sequence ID" value="AHN59926.1"/>
    <property type="molecule type" value="Genomic_DNA"/>
</dbReference>
<dbReference type="EMBL" id="AY052079">
    <property type="protein sequence ID" value="AAK93503.1"/>
    <property type="molecule type" value="mRNA"/>
</dbReference>
<dbReference type="EMBL" id="BT053690">
    <property type="protein sequence ID" value="ACK77607.1"/>
    <property type="molecule type" value="mRNA"/>
</dbReference>
<dbReference type="PIR" id="A47740">
    <property type="entry name" value="A47740"/>
</dbReference>
<dbReference type="PIR" id="JT0272">
    <property type="entry name" value="DEFFG6"/>
</dbReference>
<dbReference type="RefSeq" id="NP_001285456.1">
    <molecule id="P12646-2"/>
    <property type="nucleotide sequence ID" value="NM_001298527.1"/>
</dbReference>
<dbReference type="RefSeq" id="NP_523411.1">
    <molecule id="P12646-1"/>
    <property type="nucleotide sequence ID" value="NM_078687.2"/>
</dbReference>
<dbReference type="RefSeq" id="NP_728287.1">
    <molecule id="P12646-2"/>
    <property type="nucleotide sequence ID" value="NM_167676.2"/>
</dbReference>
<dbReference type="SMR" id="P12646"/>
<dbReference type="BioGRID" id="59270">
    <property type="interactions" value="13"/>
</dbReference>
<dbReference type="DIP" id="DIP-20748N"/>
<dbReference type="FunCoup" id="P12646">
    <property type="interactions" value="850"/>
</dbReference>
<dbReference type="IntAct" id="P12646">
    <property type="interactions" value="3"/>
</dbReference>
<dbReference type="STRING" id="7227.FBpp0074517"/>
<dbReference type="iPTMnet" id="P12646"/>
<dbReference type="PaxDb" id="7227-FBpp0074517"/>
<dbReference type="DNASU" id="32974"/>
<dbReference type="EnsemblMetazoa" id="FBtr0074748">
    <molecule id="P12646-1"/>
    <property type="protein sequence ID" value="FBpp0074517"/>
    <property type="gene ID" value="FBgn0004057"/>
</dbReference>
<dbReference type="EnsemblMetazoa" id="FBtr0074749">
    <molecule id="P12646-2"/>
    <property type="protein sequence ID" value="FBpp0074518"/>
    <property type="gene ID" value="FBgn0004057"/>
</dbReference>
<dbReference type="EnsemblMetazoa" id="FBtr0340611">
    <molecule id="P12646-2"/>
    <property type="protein sequence ID" value="FBpp0309476"/>
    <property type="gene ID" value="FBgn0004057"/>
</dbReference>
<dbReference type="GeneID" id="32974"/>
<dbReference type="KEGG" id="dme:Dmel_CG12529"/>
<dbReference type="AGR" id="FB:FBgn0004057"/>
<dbReference type="CTD" id="32974"/>
<dbReference type="FlyBase" id="FBgn0004057">
    <property type="gene designation" value="G6pd"/>
</dbReference>
<dbReference type="VEuPathDB" id="VectorBase:FBgn0004057"/>
<dbReference type="eggNOG" id="KOG0563">
    <property type="taxonomic scope" value="Eukaryota"/>
</dbReference>
<dbReference type="GeneTree" id="ENSGT00530000063435"/>
<dbReference type="HOGENOM" id="CLU_013524_2_3_1"/>
<dbReference type="InParanoid" id="P12646"/>
<dbReference type="OMA" id="ERAGYYE"/>
<dbReference type="OrthoDB" id="60984at2759"/>
<dbReference type="PhylomeDB" id="P12646"/>
<dbReference type="Reactome" id="R-DME-5628897">
    <property type="pathway name" value="TP53 Regulates Metabolic Genes"/>
</dbReference>
<dbReference type="Reactome" id="R-DME-71336">
    <property type="pathway name" value="Pentose phosphate pathway"/>
</dbReference>
<dbReference type="UniPathway" id="UPA00115">
    <property type="reaction ID" value="UER00408"/>
</dbReference>
<dbReference type="BioGRID-ORCS" id="32974">
    <property type="hits" value="0 hits in 1 CRISPR screen"/>
</dbReference>
<dbReference type="GenomeRNAi" id="32974"/>
<dbReference type="PRO" id="PR:P12646"/>
<dbReference type="Proteomes" id="UP000000803">
    <property type="component" value="Chromosome X"/>
</dbReference>
<dbReference type="Bgee" id="FBgn0004057">
    <property type="expression patterns" value="Expressed in crop (Drosophila) and 102 other cell types or tissues"/>
</dbReference>
<dbReference type="ExpressionAtlas" id="P12646">
    <property type="expression patterns" value="baseline and differential"/>
</dbReference>
<dbReference type="GO" id="GO:0005829">
    <property type="term" value="C:cytosol"/>
    <property type="evidence" value="ECO:0000318"/>
    <property type="project" value="GO_Central"/>
</dbReference>
<dbReference type="GO" id="GO:0004345">
    <property type="term" value="F:glucose-6-phosphate dehydrogenase activity"/>
    <property type="evidence" value="ECO:0000314"/>
    <property type="project" value="FlyBase"/>
</dbReference>
<dbReference type="GO" id="GO:0050661">
    <property type="term" value="F:NADP binding"/>
    <property type="evidence" value="ECO:0007669"/>
    <property type="project" value="InterPro"/>
</dbReference>
<dbReference type="GO" id="GO:0051156">
    <property type="term" value="P:glucose 6-phosphate metabolic process"/>
    <property type="evidence" value="ECO:0000250"/>
    <property type="project" value="UniProtKB"/>
</dbReference>
<dbReference type="GO" id="GO:0006006">
    <property type="term" value="P:glucose metabolic process"/>
    <property type="evidence" value="ECO:0000318"/>
    <property type="project" value="GO_Central"/>
</dbReference>
<dbReference type="GO" id="GO:0006739">
    <property type="term" value="P:NADP metabolic process"/>
    <property type="evidence" value="ECO:0000250"/>
    <property type="project" value="UniProtKB"/>
</dbReference>
<dbReference type="GO" id="GO:0009051">
    <property type="term" value="P:pentose-phosphate shunt, oxidative branch"/>
    <property type="evidence" value="ECO:0000315"/>
    <property type="project" value="FlyBase"/>
</dbReference>
<dbReference type="FunFam" id="3.30.360.10:FF:000013">
    <property type="entry name" value="Glucose-6-phosphate 1-dehydrogenase"/>
    <property type="match status" value="1"/>
</dbReference>
<dbReference type="FunFam" id="3.40.50.720:FF:000111">
    <property type="entry name" value="Glucose-6-phosphate 1-dehydrogenase"/>
    <property type="match status" value="1"/>
</dbReference>
<dbReference type="Gene3D" id="3.30.360.10">
    <property type="entry name" value="Dihydrodipicolinate Reductase, domain 2"/>
    <property type="match status" value="1"/>
</dbReference>
<dbReference type="Gene3D" id="3.40.50.720">
    <property type="entry name" value="NAD(P)-binding Rossmann-like Domain"/>
    <property type="match status" value="1"/>
</dbReference>
<dbReference type="HAMAP" id="MF_00966">
    <property type="entry name" value="G6PD"/>
    <property type="match status" value="1"/>
</dbReference>
<dbReference type="InterPro" id="IPR001282">
    <property type="entry name" value="G6P_DH"/>
</dbReference>
<dbReference type="InterPro" id="IPR019796">
    <property type="entry name" value="G6P_DH_AS"/>
</dbReference>
<dbReference type="InterPro" id="IPR022675">
    <property type="entry name" value="G6P_DH_C"/>
</dbReference>
<dbReference type="InterPro" id="IPR022674">
    <property type="entry name" value="G6P_DH_NAD-bd"/>
</dbReference>
<dbReference type="InterPro" id="IPR036291">
    <property type="entry name" value="NAD(P)-bd_dom_sf"/>
</dbReference>
<dbReference type="NCBIfam" id="TIGR00871">
    <property type="entry name" value="zwf"/>
    <property type="match status" value="1"/>
</dbReference>
<dbReference type="PANTHER" id="PTHR23429:SF0">
    <property type="entry name" value="GLUCOSE-6-PHOSPHATE 1-DEHYDROGENASE"/>
    <property type="match status" value="1"/>
</dbReference>
<dbReference type="PANTHER" id="PTHR23429">
    <property type="entry name" value="GLUCOSE-6-PHOSPHATE 1-DEHYDROGENASE G6PD"/>
    <property type="match status" value="1"/>
</dbReference>
<dbReference type="Pfam" id="PF02781">
    <property type="entry name" value="G6PD_C"/>
    <property type="match status" value="1"/>
</dbReference>
<dbReference type="Pfam" id="PF00479">
    <property type="entry name" value="G6PD_N"/>
    <property type="match status" value="1"/>
</dbReference>
<dbReference type="PIRSF" id="PIRSF000110">
    <property type="entry name" value="G6PD"/>
    <property type="match status" value="1"/>
</dbReference>
<dbReference type="PRINTS" id="PR00079">
    <property type="entry name" value="G6PDHDRGNASE"/>
</dbReference>
<dbReference type="SUPFAM" id="SSF55347">
    <property type="entry name" value="Glyceraldehyde-3-phosphate dehydrogenase-like, C-terminal domain"/>
    <property type="match status" value="1"/>
</dbReference>
<dbReference type="SUPFAM" id="SSF51735">
    <property type="entry name" value="NAD(P)-binding Rossmann-fold domains"/>
    <property type="match status" value="1"/>
</dbReference>
<dbReference type="PROSITE" id="PS00069">
    <property type="entry name" value="G6P_DEHYDROGENASE"/>
    <property type="match status" value="1"/>
</dbReference>
<name>G6PD_DROME</name>
<protein>
    <recommendedName>
        <fullName evidence="8">Glucose-6-phosphate 1-dehydrogenase</fullName>
        <ecNumber evidence="2">1.1.1.49</ecNumber>
    </recommendedName>
    <alternativeName>
        <fullName evidence="5">Protein zwischenferment</fullName>
    </alternativeName>
</protein>
<organism evidence="9">
    <name type="scientific">Drosophila melanogaster</name>
    <name type="common">Fruit fly</name>
    <dbReference type="NCBI Taxonomy" id="7227"/>
    <lineage>
        <taxon>Eukaryota</taxon>
        <taxon>Metazoa</taxon>
        <taxon>Ecdysozoa</taxon>
        <taxon>Arthropoda</taxon>
        <taxon>Hexapoda</taxon>
        <taxon>Insecta</taxon>
        <taxon>Pterygota</taxon>
        <taxon>Neoptera</taxon>
        <taxon>Endopterygota</taxon>
        <taxon>Diptera</taxon>
        <taxon>Brachycera</taxon>
        <taxon>Muscomorpha</taxon>
        <taxon>Ephydroidea</taxon>
        <taxon>Drosophilidae</taxon>
        <taxon>Drosophila</taxon>
        <taxon>Sophophora</taxon>
    </lineage>
</organism>
<sequence>MATQKEDHTALDLIIKSLKSPTMVCEGTHFDGKIPHTFVIFGASGDLAKKKIYPTLWWLYRDDLLPKPTKFCGYARSMLTVDSIKEQCLPYMKVQPHEQKKYEEFWALNEYVSGRYDGRTGFELLNQQLEIMENKNKANRIFYLALPPSVFEEVTVNIKQICMSVCGWNRVIIEKPFGRDDASSQALSDHLAGLFQEDQLYRIDHYLGKEMVQNLMTIRFGNKILSSTWNRENIASVLITFKEPFGTQGRGGYFDEFGIIRDVMQNHLLQILSLVAMEKPVSCHPDDIRDEKVKVLKSIEALTLDDMVLGQYLGNPQGTNDDARTGYVEDPTVSNDSNTPTYALGVLKINNERWQGVPFILRCGKALNERKAEVRIQYQDVPGDIFEGNTKRNELVIRVQPGEALYFKMMTKSPGITFDIEETELDLTYEHRYKDSYLPDAYERLILDVFCGSQMHFVRSDELREAWRIFTPILHQIEKEHIRPITYQYGSRGPKEADRKCEENNFKYSGSYKWHGGKAATSNH</sequence>